<feature type="chain" id="PRO_0000078616" description="Chaperone protein HscA homolog">
    <location>
        <begin position="1"/>
        <end position="620"/>
    </location>
</feature>
<name>HSCA_BORBR</name>
<sequence length="620" mass="65256">MALLQISEPGDSPAPHQRKLAVGIDLGTTNSLVAAVRSSVPEVLADAQGQVLLPSAVRYLDGGAVRIGREALLEQARDPLNTIVSVKRFMGRSAADAVASGAPYEFVDAPGMVRLRTVQGDLSPVEVSAQILAVLRQRAEDVLGDDLVGAVITVPAYFDDAQRQATRDAARLAGLNVLRLLNEPTAAAIAYGLDQAAEGIYAVYDLGGGTFDISILRLTQGVFEVIATGGDTALGGDDFDSAIVAHACAGEDVAALPVADRRALLVAARAAREALTDQAQAPFEVTLRDGRAIQATLTRAQFEQLAEPLVGRTLDSARRALRDAGLAVGDVRGVVMVGGATRMPVVRQQVGALFGTEPLTNLDPDQVVALGAALQANLLAGNRAPGEDWLLLDVIPLSLGLETMGGLVERIIPRNSTIPVARAQEFTTFKDGQTAMSVHVVQGERDLVSDCRSLARFELRGIPPMVAGAARIRVTFQVDADGLLSVTAREQSTGVEAAVAVKPSYGLSDDEIARMLADSVTQADSDARARMLREQQVEARQLVESVGAALAADGDLLDPAERATVDQRLQAAAQAQSLDDVEAVRAAVQALSDATEEFAARRMDRSIRAALAGRKLDELA</sequence>
<comment type="function">
    <text evidence="1">Chaperone involved in the maturation of iron-sulfur cluster-containing proteins. Has a low intrinsic ATPase activity which is markedly stimulated by HscB.</text>
</comment>
<comment type="similarity">
    <text evidence="1">Belongs to the heat shock protein 70 family.</text>
</comment>
<comment type="sequence caution" evidence="2">
    <conflict type="erroneous initiation">
        <sequence resource="EMBL-CDS" id="CAE32776"/>
    </conflict>
</comment>
<protein>
    <recommendedName>
        <fullName evidence="1">Chaperone protein HscA homolog</fullName>
    </recommendedName>
</protein>
<proteinExistence type="inferred from homology"/>
<accession>Q7WK59</accession>
<dbReference type="EMBL" id="BX640443">
    <property type="protein sequence ID" value="CAE32776.1"/>
    <property type="status" value="ALT_INIT"/>
    <property type="molecule type" value="Genomic_DNA"/>
</dbReference>
<dbReference type="RefSeq" id="WP_010926439.1">
    <property type="nucleotide sequence ID" value="NC_002927.3"/>
</dbReference>
<dbReference type="SMR" id="Q7WK59"/>
<dbReference type="GeneID" id="56478395"/>
<dbReference type="KEGG" id="bbr:BB2280"/>
<dbReference type="eggNOG" id="COG0443">
    <property type="taxonomic scope" value="Bacteria"/>
</dbReference>
<dbReference type="HOGENOM" id="CLU_005965_2_3_4"/>
<dbReference type="Proteomes" id="UP000001027">
    <property type="component" value="Chromosome"/>
</dbReference>
<dbReference type="GO" id="GO:0005524">
    <property type="term" value="F:ATP binding"/>
    <property type="evidence" value="ECO:0007669"/>
    <property type="project" value="UniProtKB-KW"/>
</dbReference>
<dbReference type="GO" id="GO:0016887">
    <property type="term" value="F:ATP hydrolysis activity"/>
    <property type="evidence" value="ECO:0007669"/>
    <property type="project" value="UniProtKB-UniRule"/>
</dbReference>
<dbReference type="GO" id="GO:0140662">
    <property type="term" value="F:ATP-dependent protein folding chaperone"/>
    <property type="evidence" value="ECO:0007669"/>
    <property type="project" value="InterPro"/>
</dbReference>
<dbReference type="GO" id="GO:0051082">
    <property type="term" value="F:unfolded protein binding"/>
    <property type="evidence" value="ECO:0007669"/>
    <property type="project" value="InterPro"/>
</dbReference>
<dbReference type="GO" id="GO:0016226">
    <property type="term" value="P:iron-sulfur cluster assembly"/>
    <property type="evidence" value="ECO:0007669"/>
    <property type="project" value="InterPro"/>
</dbReference>
<dbReference type="FunFam" id="3.30.420.40:FF:000046">
    <property type="entry name" value="Chaperone protein HscA"/>
    <property type="match status" value="1"/>
</dbReference>
<dbReference type="FunFam" id="2.60.34.10:FF:000005">
    <property type="entry name" value="Chaperone protein HscA homolog"/>
    <property type="match status" value="1"/>
</dbReference>
<dbReference type="Gene3D" id="1.20.1270.10">
    <property type="match status" value="1"/>
</dbReference>
<dbReference type="Gene3D" id="3.30.420.40">
    <property type="match status" value="2"/>
</dbReference>
<dbReference type="Gene3D" id="3.90.640.10">
    <property type="entry name" value="Actin, Chain A, domain 4"/>
    <property type="match status" value="1"/>
</dbReference>
<dbReference type="Gene3D" id="2.60.34.10">
    <property type="entry name" value="Substrate Binding Domain Of DNAk, Chain A, domain 1"/>
    <property type="match status" value="1"/>
</dbReference>
<dbReference type="HAMAP" id="MF_00679">
    <property type="entry name" value="HscA"/>
    <property type="match status" value="1"/>
</dbReference>
<dbReference type="InterPro" id="IPR043129">
    <property type="entry name" value="ATPase_NBD"/>
</dbReference>
<dbReference type="InterPro" id="IPR018181">
    <property type="entry name" value="Heat_shock_70_CS"/>
</dbReference>
<dbReference type="InterPro" id="IPR029048">
    <property type="entry name" value="HSP70_C_sf"/>
</dbReference>
<dbReference type="InterPro" id="IPR029047">
    <property type="entry name" value="HSP70_peptide-bd_sf"/>
</dbReference>
<dbReference type="InterPro" id="IPR013126">
    <property type="entry name" value="Hsp_70_fam"/>
</dbReference>
<dbReference type="InterPro" id="IPR010236">
    <property type="entry name" value="ISC_FeS_clus_asmbl_HscA"/>
</dbReference>
<dbReference type="NCBIfam" id="TIGR01991">
    <property type="entry name" value="HscA"/>
    <property type="match status" value="1"/>
</dbReference>
<dbReference type="NCBIfam" id="NF003520">
    <property type="entry name" value="PRK05183.1"/>
    <property type="match status" value="1"/>
</dbReference>
<dbReference type="PANTHER" id="PTHR19375">
    <property type="entry name" value="HEAT SHOCK PROTEIN 70KDA"/>
    <property type="match status" value="1"/>
</dbReference>
<dbReference type="Pfam" id="PF00012">
    <property type="entry name" value="HSP70"/>
    <property type="match status" value="1"/>
</dbReference>
<dbReference type="PRINTS" id="PR00301">
    <property type="entry name" value="HEATSHOCK70"/>
</dbReference>
<dbReference type="SUPFAM" id="SSF53067">
    <property type="entry name" value="Actin-like ATPase domain"/>
    <property type="match status" value="2"/>
</dbReference>
<dbReference type="SUPFAM" id="SSF100934">
    <property type="entry name" value="Heat shock protein 70kD (HSP70), C-terminal subdomain"/>
    <property type="match status" value="1"/>
</dbReference>
<dbReference type="SUPFAM" id="SSF100920">
    <property type="entry name" value="Heat shock protein 70kD (HSP70), peptide-binding domain"/>
    <property type="match status" value="1"/>
</dbReference>
<dbReference type="PROSITE" id="PS00297">
    <property type="entry name" value="HSP70_1"/>
    <property type="match status" value="1"/>
</dbReference>
<dbReference type="PROSITE" id="PS00329">
    <property type="entry name" value="HSP70_2"/>
    <property type="match status" value="1"/>
</dbReference>
<dbReference type="PROSITE" id="PS01036">
    <property type="entry name" value="HSP70_3"/>
    <property type="match status" value="1"/>
</dbReference>
<gene>
    <name evidence="1" type="primary">hscA</name>
    <name type="ordered locus">BB2280</name>
</gene>
<organism>
    <name type="scientific">Bordetella bronchiseptica (strain ATCC BAA-588 / NCTC 13252 / RB50)</name>
    <name type="common">Alcaligenes bronchisepticus</name>
    <dbReference type="NCBI Taxonomy" id="257310"/>
    <lineage>
        <taxon>Bacteria</taxon>
        <taxon>Pseudomonadati</taxon>
        <taxon>Pseudomonadota</taxon>
        <taxon>Betaproteobacteria</taxon>
        <taxon>Burkholderiales</taxon>
        <taxon>Alcaligenaceae</taxon>
        <taxon>Bordetella</taxon>
    </lineage>
</organism>
<evidence type="ECO:0000255" key="1">
    <source>
        <dbReference type="HAMAP-Rule" id="MF_00679"/>
    </source>
</evidence>
<evidence type="ECO:0000305" key="2"/>
<reference key="1">
    <citation type="journal article" date="2003" name="Nat. Genet.">
        <title>Comparative analysis of the genome sequences of Bordetella pertussis, Bordetella parapertussis and Bordetella bronchiseptica.</title>
        <authorList>
            <person name="Parkhill J."/>
            <person name="Sebaihia M."/>
            <person name="Preston A."/>
            <person name="Murphy L.D."/>
            <person name="Thomson N.R."/>
            <person name="Harris D.E."/>
            <person name="Holden M.T.G."/>
            <person name="Churcher C.M."/>
            <person name="Bentley S.D."/>
            <person name="Mungall K.L."/>
            <person name="Cerdeno-Tarraga A.-M."/>
            <person name="Temple L."/>
            <person name="James K.D."/>
            <person name="Harris B."/>
            <person name="Quail M.A."/>
            <person name="Achtman M."/>
            <person name="Atkin R."/>
            <person name="Baker S."/>
            <person name="Basham D."/>
            <person name="Bason N."/>
            <person name="Cherevach I."/>
            <person name="Chillingworth T."/>
            <person name="Collins M."/>
            <person name="Cronin A."/>
            <person name="Davis P."/>
            <person name="Doggett J."/>
            <person name="Feltwell T."/>
            <person name="Goble A."/>
            <person name="Hamlin N."/>
            <person name="Hauser H."/>
            <person name="Holroyd S."/>
            <person name="Jagels K."/>
            <person name="Leather S."/>
            <person name="Moule S."/>
            <person name="Norberczak H."/>
            <person name="O'Neil S."/>
            <person name="Ormond D."/>
            <person name="Price C."/>
            <person name="Rabbinowitsch E."/>
            <person name="Rutter S."/>
            <person name="Sanders M."/>
            <person name="Saunders D."/>
            <person name="Seeger K."/>
            <person name="Sharp S."/>
            <person name="Simmonds M."/>
            <person name="Skelton J."/>
            <person name="Squares R."/>
            <person name="Squares S."/>
            <person name="Stevens K."/>
            <person name="Unwin L."/>
            <person name="Whitehead S."/>
            <person name="Barrell B.G."/>
            <person name="Maskell D.J."/>
        </authorList>
    </citation>
    <scope>NUCLEOTIDE SEQUENCE [LARGE SCALE GENOMIC DNA]</scope>
    <source>
        <strain>ATCC BAA-588 / NCTC 13252 / RB50</strain>
    </source>
</reference>
<keyword id="KW-0067">ATP-binding</keyword>
<keyword id="KW-0143">Chaperone</keyword>
<keyword id="KW-0547">Nucleotide-binding</keyword>